<dbReference type="EMBL" id="BC113288">
    <property type="protein sequence ID" value="AAI13289.1"/>
    <property type="molecule type" value="mRNA"/>
</dbReference>
<dbReference type="RefSeq" id="NP_001039369.1">
    <property type="nucleotide sequence ID" value="NM_001045904.1"/>
</dbReference>
<dbReference type="FunCoup" id="Q29S00">
    <property type="interactions" value="1467"/>
</dbReference>
<dbReference type="STRING" id="9913.ENSBTAP00000066125"/>
<dbReference type="PaxDb" id="9913-ENSBTAP00000010509"/>
<dbReference type="Ensembl" id="ENSBTAT00000010509.7">
    <property type="protein sequence ID" value="ENSBTAP00000010509.5"/>
    <property type="gene ID" value="ENSBTAG00000007994.7"/>
</dbReference>
<dbReference type="GeneID" id="504974"/>
<dbReference type="KEGG" id="bta:504974"/>
<dbReference type="CTD" id="127700"/>
<dbReference type="VEuPathDB" id="HostDB:ENSBTAG00000007994"/>
<dbReference type="VGNC" id="VGNC:32468">
    <property type="gene designation" value="OSCP1"/>
</dbReference>
<dbReference type="eggNOG" id="KOG4033">
    <property type="taxonomic scope" value="Eukaryota"/>
</dbReference>
<dbReference type="GeneTree" id="ENSGT00390000004808"/>
<dbReference type="HOGENOM" id="CLU_039360_1_0_1"/>
<dbReference type="InParanoid" id="Q29S00"/>
<dbReference type="OrthoDB" id="2157380at2759"/>
<dbReference type="TreeFam" id="TF105789"/>
<dbReference type="Proteomes" id="UP000009136">
    <property type="component" value="Chromosome 3"/>
</dbReference>
<dbReference type="Bgee" id="ENSBTAG00000007994">
    <property type="expression patterns" value="Expressed in oviduct epithelium and 106 other cell types or tissues"/>
</dbReference>
<dbReference type="GO" id="GO:0009925">
    <property type="term" value="C:basal plasma membrane"/>
    <property type="evidence" value="ECO:0007669"/>
    <property type="project" value="UniProtKB-SubCell"/>
</dbReference>
<dbReference type="GO" id="GO:0005737">
    <property type="term" value="C:cytoplasm"/>
    <property type="evidence" value="ECO:0000318"/>
    <property type="project" value="GO_Central"/>
</dbReference>
<dbReference type="GO" id="GO:0005886">
    <property type="term" value="C:plasma membrane"/>
    <property type="evidence" value="ECO:0000318"/>
    <property type="project" value="GO_Central"/>
</dbReference>
<dbReference type="InterPro" id="IPR019332">
    <property type="entry name" value="OSCP1"/>
</dbReference>
<dbReference type="PANTHER" id="PTHR21439">
    <property type="entry name" value="OXIDORED-NITRO DOMAIN-CONTAINING PROTEIN"/>
    <property type="match status" value="1"/>
</dbReference>
<dbReference type="PANTHER" id="PTHR21439:SF0">
    <property type="entry name" value="PROTEIN OSCP1"/>
    <property type="match status" value="1"/>
</dbReference>
<dbReference type="Pfam" id="PF10188">
    <property type="entry name" value="Oscp1"/>
    <property type="match status" value="1"/>
</dbReference>
<reference key="1">
    <citation type="submission" date="2006-02" db="EMBL/GenBank/DDBJ databases">
        <authorList>
            <consortium name="NIH - Mammalian Gene Collection (MGC) project"/>
        </authorList>
    </citation>
    <scope>NUCLEOTIDE SEQUENCE [LARGE SCALE MRNA]</scope>
    <source>
        <strain>Hereford</strain>
        <tissue>Uterus</tissue>
    </source>
</reference>
<gene>
    <name type="primary">OSCP1</name>
</gene>
<proteinExistence type="evidence at transcript level"/>
<keyword id="KW-1003">Cell membrane</keyword>
<keyword id="KW-0472">Membrane</keyword>
<keyword id="KW-1185">Reference proteome</keyword>
<keyword id="KW-0813">Transport</keyword>
<protein>
    <recommendedName>
        <fullName>Protein OSCP1</fullName>
    </recommendedName>
</protein>
<accession>Q29S00</accession>
<sequence length="379" mass="43017">MSMRTLPLLFLNLGGEMLYILDQRLRAQNIPGDKARKVMNDIISTMFNQKFMDELFKPQELYSKKALRTVYDRLAHASIMRLNQASMDKLYDLMTMAFKYQVLLCPRPKDVLLVTLNHLDAIKGLIQDSPTILHQVDKTFRQLTDIYGGLSAGEFQLIRQTLLIFFQDLHIRVSIFLKDKVQNSSGRFVLPVSGPVPWGTEVPGLIRTFNNKGKEVKRTEFKHGGSYVAAPKEGSLELYGDRVLKLGTNMYSVNRPVETHMSAASKNLASQTQESIVPNPLAKEELNLLARLIGGMEIQKPSGPEPGFRLNLFTTDEEEEQAALTRPEELSYKVINIQATQDQQTNQELVRIMGEFEITDQSRQSSSKGDDWLAMMDEL</sequence>
<organism>
    <name type="scientific">Bos taurus</name>
    <name type="common">Bovine</name>
    <dbReference type="NCBI Taxonomy" id="9913"/>
    <lineage>
        <taxon>Eukaryota</taxon>
        <taxon>Metazoa</taxon>
        <taxon>Chordata</taxon>
        <taxon>Craniata</taxon>
        <taxon>Vertebrata</taxon>
        <taxon>Euteleostomi</taxon>
        <taxon>Mammalia</taxon>
        <taxon>Eutheria</taxon>
        <taxon>Laurasiatheria</taxon>
        <taxon>Artiodactyla</taxon>
        <taxon>Ruminantia</taxon>
        <taxon>Pecora</taxon>
        <taxon>Bovidae</taxon>
        <taxon>Bovinae</taxon>
        <taxon>Bos</taxon>
    </lineage>
</organism>
<feature type="chain" id="PRO_0000251964" description="Protein OSCP1">
    <location>
        <begin position="1"/>
        <end position="379"/>
    </location>
</feature>
<name>OSCP1_BOVIN</name>
<comment type="function">
    <text evidence="1">May be involved in drug clearance in the placenta.</text>
</comment>
<comment type="subcellular location">
    <subcellularLocation>
        <location evidence="1">Basal cell membrane</location>
    </subcellularLocation>
</comment>
<evidence type="ECO:0000250" key="1"/>